<comment type="function">
    <text evidence="1">Catalyzes the phosphorylation of the hydroxyl group of 4-methyl-5-beta-hydroxyethylthiazole (THZ).</text>
</comment>
<comment type="catalytic activity">
    <reaction evidence="1">
        <text>5-(2-hydroxyethyl)-4-methylthiazole + ATP = 4-methyl-5-(2-phosphooxyethyl)-thiazole + ADP + H(+)</text>
        <dbReference type="Rhea" id="RHEA:24212"/>
        <dbReference type="ChEBI" id="CHEBI:15378"/>
        <dbReference type="ChEBI" id="CHEBI:17957"/>
        <dbReference type="ChEBI" id="CHEBI:30616"/>
        <dbReference type="ChEBI" id="CHEBI:58296"/>
        <dbReference type="ChEBI" id="CHEBI:456216"/>
        <dbReference type="EC" id="2.7.1.50"/>
    </reaction>
</comment>
<comment type="cofactor">
    <cofactor evidence="1">
        <name>Mg(2+)</name>
        <dbReference type="ChEBI" id="CHEBI:18420"/>
    </cofactor>
</comment>
<comment type="pathway">
    <text evidence="1">Cofactor biosynthesis; thiamine diphosphate biosynthesis; 4-methyl-5-(2-phosphoethyl)-thiazole from 5-(2-hydroxyethyl)-4-methylthiazole: step 1/1.</text>
</comment>
<comment type="similarity">
    <text evidence="1">Belongs to the Thz kinase family.</text>
</comment>
<keyword id="KW-0067">ATP-binding</keyword>
<keyword id="KW-0418">Kinase</keyword>
<keyword id="KW-0460">Magnesium</keyword>
<keyword id="KW-0479">Metal-binding</keyword>
<keyword id="KW-0547">Nucleotide-binding</keyword>
<keyword id="KW-1185">Reference proteome</keyword>
<keyword id="KW-0784">Thiamine biosynthesis</keyword>
<keyword id="KW-0808">Transferase</keyword>
<sequence>MSDVDAAVDLAAALGDIDTATPLVNSVTNNVTVNDVANITLHWGGLPVMSDDAREVDDMVATADGCLINMGTVDEDGEESMVVAGTAANEGDKPLVVDPVGVGATPTRTRVANRLLDELDVTILNGNHGEITALAGDDADVRGVESVGEYADIAETALSCARTHDTVVVASGETDIVASPEEAYEITAGHPLMAQIVGTGCMLGVTLATFAAGMENATPLDAALAGTVGFGLAGEKAAEEGEYNGPASYKTAFLDTVAGLEAAPDDPAGRIERVLSVT</sequence>
<evidence type="ECO:0000255" key="1">
    <source>
        <dbReference type="HAMAP-Rule" id="MF_00228"/>
    </source>
</evidence>
<name>THIM_NATPD</name>
<proteinExistence type="inferred from homology"/>
<reference key="1">
    <citation type="journal article" date="2005" name="Genome Res.">
        <title>Living with two extremes: conclusions from the genome sequence of Natronomonas pharaonis.</title>
        <authorList>
            <person name="Falb M."/>
            <person name="Pfeiffer F."/>
            <person name="Palm P."/>
            <person name="Rodewald K."/>
            <person name="Hickmann V."/>
            <person name="Tittor J."/>
            <person name="Oesterhelt D."/>
        </authorList>
    </citation>
    <scope>NUCLEOTIDE SEQUENCE [LARGE SCALE GENOMIC DNA]</scope>
    <source>
        <strain>ATCC 35678 / DSM 2160 / CIP 103997 / JCM 8858 / NBRC 14720 / NCIMB 2260 / Gabara</strain>
    </source>
</reference>
<accession>Q3IP35</accession>
<dbReference type="EC" id="2.7.1.50" evidence="1"/>
<dbReference type="EMBL" id="CR936257">
    <property type="protein sequence ID" value="CAI50117.1"/>
    <property type="molecule type" value="Genomic_DNA"/>
</dbReference>
<dbReference type="RefSeq" id="WP_011323733.1">
    <property type="nucleotide sequence ID" value="NC_007426.1"/>
</dbReference>
<dbReference type="SMR" id="Q3IP35"/>
<dbReference type="STRING" id="348780.NP_4052A"/>
<dbReference type="EnsemblBacteria" id="CAI50117">
    <property type="protein sequence ID" value="CAI50117"/>
    <property type="gene ID" value="NP_4052A"/>
</dbReference>
<dbReference type="GeneID" id="3703251"/>
<dbReference type="KEGG" id="nph:NP_4052A"/>
<dbReference type="eggNOG" id="arCOG00019">
    <property type="taxonomic scope" value="Archaea"/>
</dbReference>
<dbReference type="HOGENOM" id="CLU_019943_0_1_2"/>
<dbReference type="OrthoDB" id="214286at2157"/>
<dbReference type="UniPathway" id="UPA00060">
    <property type="reaction ID" value="UER00139"/>
</dbReference>
<dbReference type="Proteomes" id="UP000002698">
    <property type="component" value="Chromosome"/>
</dbReference>
<dbReference type="GO" id="GO:0005524">
    <property type="term" value="F:ATP binding"/>
    <property type="evidence" value="ECO:0007669"/>
    <property type="project" value="UniProtKB-UniRule"/>
</dbReference>
<dbReference type="GO" id="GO:0004417">
    <property type="term" value="F:hydroxyethylthiazole kinase activity"/>
    <property type="evidence" value="ECO:0007669"/>
    <property type="project" value="UniProtKB-UniRule"/>
</dbReference>
<dbReference type="GO" id="GO:0000287">
    <property type="term" value="F:magnesium ion binding"/>
    <property type="evidence" value="ECO:0007669"/>
    <property type="project" value="UniProtKB-UniRule"/>
</dbReference>
<dbReference type="GO" id="GO:0009228">
    <property type="term" value="P:thiamine biosynthetic process"/>
    <property type="evidence" value="ECO:0007669"/>
    <property type="project" value="UniProtKB-KW"/>
</dbReference>
<dbReference type="GO" id="GO:0009229">
    <property type="term" value="P:thiamine diphosphate biosynthetic process"/>
    <property type="evidence" value="ECO:0007669"/>
    <property type="project" value="UniProtKB-UniRule"/>
</dbReference>
<dbReference type="CDD" id="cd01170">
    <property type="entry name" value="THZ_kinase"/>
    <property type="match status" value="1"/>
</dbReference>
<dbReference type="Gene3D" id="3.40.1190.20">
    <property type="match status" value="1"/>
</dbReference>
<dbReference type="HAMAP" id="MF_00228">
    <property type="entry name" value="Thz_kinase"/>
    <property type="match status" value="1"/>
</dbReference>
<dbReference type="InterPro" id="IPR000417">
    <property type="entry name" value="Hyethyz_kinase"/>
</dbReference>
<dbReference type="InterPro" id="IPR029056">
    <property type="entry name" value="Ribokinase-like"/>
</dbReference>
<dbReference type="NCBIfam" id="NF006830">
    <property type="entry name" value="PRK09355.1"/>
    <property type="match status" value="1"/>
</dbReference>
<dbReference type="Pfam" id="PF02110">
    <property type="entry name" value="HK"/>
    <property type="match status" value="1"/>
</dbReference>
<dbReference type="PIRSF" id="PIRSF000513">
    <property type="entry name" value="Thz_kinase"/>
    <property type="match status" value="1"/>
</dbReference>
<dbReference type="PRINTS" id="PR01099">
    <property type="entry name" value="HYETHTZKNASE"/>
</dbReference>
<dbReference type="SUPFAM" id="SSF53613">
    <property type="entry name" value="Ribokinase-like"/>
    <property type="match status" value="1"/>
</dbReference>
<protein>
    <recommendedName>
        <fullName evidence="1">Hydroxyethylthiazole kinase</fullName>
        <ecNumber evidence="1">2.7.1.50</ecNumber>
    </recommendedName>
    <alternativeName>
        <fullName evidence="1">4-methyl-5-beta-hydroxyethylthiazole kinase</fullName>
        <shortName evidence="1">TH kinase</shortName>
        <shortName evidence="1">Thz kinase</shortName>
    </alternativeName>
</protein>
<feature type="chain" id="PRO_0000383922" description="Hydroxyethylthiazole kinase">
    <location>
        <begin position="1"/>
        <end position="278"/>
    </location>
</feature>
<feature type="binding site" evidence="1">
    <location>
        <position position="49"/>
    </location>
    <ligand>
        <name>substrate</name>
    </ligand>
</feature>
<feature type="binding site" evidence="1">
    <location>
        <position position="125"/>
    </location>
    <ligand>
        <name>ATP</name>
        <dbReference type="ChEBI" id="CHEBI:30616"/>
    </ligand>
</feature>
<feature type="binding site" evidence="1">
    <location>
        <position position="171"/>
    </location>
    <ligand>
        <name>ATP</name>
        <dbReference type="ChEBI" id="CHEBI:30616"/>
    </ligand>
</feature>
<feature type="binding site" evidence="1">
    <location>
        <position position="198"/>
    </location>
    <ligand>
        <name>substrate</name>
    </ligand>
</feature>
<gene>
    <name evidence="1" type="primary">thiM</name>
    <name type="ordered locus">NP_4052A</name>
</gene>
<organism>
    <name type="scientific">Natronomonas pharaonis (strain ATCC 35678 / DSM 2160 / CIP 103997 / JCM 8858 / NBRC 14720 / NCIMB 2260 / Gabara)</name>
    <name type="common">Halobacterium pharaonis</name>
    <dbReference type="NCBI Taxonomy" id="348780"/>
    <lineage>
        <taxon>Archaea</taxon>
        <taxon>Methanobacteriati</taxon>
        <taxon>Methanobacteriota</taxon>
        <taxon>Stenosarchaea group</taxon>
        <taxon>Halobacteria</taxon>
        <taxon>Halobacteriales</taxon>
        <taxon>Haloarculaceae</taxon>
        <taxon>Natronomonas</taxon>
    </lineage>
</organism>